<dbReference type="EMBL" id="M65066">
    <property type="protein sequence ID" value="AAC37564.1"/>
    <property type="molecule type" value="mRNA"/>
</dbReference>
<dbReference type="EMBL" id="AK315951">
    <property type="protein sequence ID" value="BAH14322.1"/>
    <property type="molecule type" value="mRNA"/>
</dbReference>
<dbReference type="EMBL" id="AK315990">
    <property type="protein sequence ID" value="BAH14361.1"/>
    <property type="molecule type" value="mRNA"/>
</dbReference>
<dbReference type="EMBL" id="BC026734">
    <property type="protein sequence ID" value="AAH26734.1"/>
    <property type="molecule type" value="mRNA"/>
</dbReference>
<dbReference type="EMBL" id="BC036828">
    <property type="protein sequence ID" value="AAH36828.2"/>
    <property type="molecule type" value="mRNA"/>
</dbReference>
<dbReference type="CCDS" id="CCDS34579.1"/>
<dbReference type="PIR" id="JH0392">
    <property type="entry name" value="OKHUR1"/>
</dbReference>
<dbReference type="RefSeq" id="NP_001158230.1">
    <property type="nucleotide sequence ID" value="NM_001164758.2"/>
</dbReference>
<dbReference type="RefSeq" id="NP_001158231.1">
    <property type="nucleotide sequence ID" value="NM_001164759.1"/>
</dbReference>
<dbReference type="RefSeq" id="NP_001158232.1">
    <property type="nucleotide sequence ID" value="NM_001164760.2"/>
</dbReference>
<dbReference type="RefSeq" id="NP_001158233.1">
    <property type="nucleotide sequence ID" value="NM_001164761.2"/>
</dbReference>
<dbReference type="RefSeq" id="NP_001158234.1">
    <property type="nucleotide sequence ID" value="NM_001164762.2"/>
</dbReference>
<dbReference type="RefSeq" id="NP_002726.1">
    <property type="nucleotide sequence ID" value="NM_002735.3"/>
</dbReference>
<dbReference type="RefSeq" id="XP_047276563.1">
    <property type="nucleotide sequence ID" value="XM_047420607.1"/>
</dbReference>
<dbReference type="RefSeq" id="XP_047276564.1">
    <property type="nucleotide sequence ID" value="XM_047420608.1"/>
</dbReference>
<dbReference type="RefSeq" id="XP_054214610.1">
    <property type="nucleotide sequence ID" value="XM_054358635.1"/>
</dbReference>
<dbReference type="RefSeq" id="XP_054214611.1">
    <property type="nucleotide sequence ID" value="XM_054358636.1"/>
</dbReference>
<dbReference type="PDB" id="4DIN">
    <property type="method" value="X-ray"/>
    <property type="resolution" value="3.70 A"/>
    <property type="chains" value="B=1-381"/>
</dbReference>
<dbReference type="PDB" id="4F9K">
    <property type="method" value="X-ray"/>
    <property type="resolution" value="2.80 A"/>
    <property type="chains" value="A/B/C/D=11-73"/>
</dbReference>
<dbReference type="PDBsum" id="4DIN"/>
<dbReference type="PDBsum" id="4F9K"/>
<dbReference type="SMR" id="P31321"/>
<dbReference type="BioGRID" id="111561">
    <property type="interactions" value="172"/>
</dbReference>
<dbReference type="FunCoup" id="P31321">
    <property type="interactions" value="766"/>
</dbReference>
<dbReference type="IntAct" id="P31321">
    <property type="interactions" value="154"/>
</dbReference>
<dbReference type="MINT" id="P31321"/>
<dbReference type="STRING" id="9606.ENSP00000385749"/>
<dbReference type="ChEMBL" id="CHEMBL2320"/>
<dbReference type="GuidetoPHARMACOLOGY" id="1473"/>
<dbReference type="GlyGen" id="P31321">
    <property type="glycosylation" value="2 sites, 1 O-linked glycan (1 site)"/>
</dbReference>
<dbReference type="iPTMnet" id="P31321"/>
<dbReference type="PhosphoSitePlus" id="P31321"/>
<dbReference type="BioMuta" id="PRKAR1B"/>
<dbReference type="DMDM" id="229463042"/>
<dbReference type="jPOST" id="P31321"/>
<dbReference type="MassIVE" id="P31321"/>
<dbReference type="PaxDb" id="9606-ENSP00000385749"/>
<dbReference type="PeptideAtlas" id="P31321"/>
<dbReference type="ProteomicsDB" id="54780"/>
<dbReference type="Pumba" id="P31321"/>
<dbReference type="Antibodypedia" id="10769">
    <property type="antibodies" value="363 antibodies from 32 providers"/>
</dbReference>
<dbReference type="DNASU" id="5575"/>
<dbReference type="Ensembl" id="ENST00000360274.8">
    <property type="protein sequence ID" value="ENSP00000353415.4"/>
    <property type="gene ID" value="ENSG00000188191.16"/>
</dbReference>
<dbReference type="Ensembl" id="ENST00000403562.5">
    <property type="protein sequence ID" value="ENSP00000385349.1"/>
    <property type="gene ID" value="ENSG00000188191.16"/>
</dbReference>
<dbReference type="Ensembl" id="ENST00000406797.5">
    <property type="protein sequence ID" value="ENSP00000385749.1"/>
    <property type="gene ID" value="ENSG00000188191.16"/>
</dbReference>
<dbReference type="Ensembl" id="ENST00000537384.6">
    <property type="protein sequence ID" value="ENSP00000440449.1"/>
    <property type="gene ID" value="ENSG00000188191.16"/>
</dbReference>
<dbReference type="Ensembl" id="ENST00000544935.5">
    <property type="protein sequence ID" value="ENSP00000444487.1"/>
    <property type="gene ID" value="ENSG00000188191.16"/>
</dbReference>
<dbReference type="GeneID" id="5575"/>
<dbReference type="KEGG" id="hsa:5575"/>
<dbReference type="MANE-Select" id="ENST00000537384.6">
    <property type="protein sequence ID" value="ENSP00000440449.1"/>
    <property type="RefSeq nucleotide sequence ID" value="NM_001164760.2"/>
    <property type="RefSeq protein sequence ID" value="NP_001158232.1"/>
</dbReference>
<dbReference type="UCSC" id="uc003siu.3">
    <property type="organism name" value="human"/>
</dbReference>
<dbReference type="AGR" id="HGNC:9390"/>
<dbReference type="CTD" id="5575"/>
<dbReference type="DisGeNET" id="5575"/>
<dbReference type="GeneCards" id="PRKAR1B"/>
<dbReference type="HGNC" id="HGNC:9390">
    <property type="gene designation" value="PRKAR1B"/>
</dbReference>
<dbReference type="HPA" id="ENSG00000188191">
    <property type="expression patterns" value="Tissue enriched (brain)"/>
</dbReference>
<dbReference type="MalaCards" id="PRKAR1B"/>
<dbReference type="MIM" id="176911">
    <property type="type" value="gene"/>
</dbReference>
<dbReference type="MIM" id="619680">
    <property type="type" value="phenotype"/>
</dbReference>
<dbReference type="neXtProt" id="NX_P31321"/>
<dbReference type="OpenTargets" id="ENSG00000188191"/>
<dbReference type="Orphanet" id="692173">
    <property type="disease" value="Marbach-Schaaf neurodevelopmental syndrome"/>
</dbReference>
<dbReference type="Orphanet" id="412066">
    <property type="disease" value="PRKAR1B-related neurodegenerative dementia with intermediate filaments"/>
</dbReference>
<dbReference type="PharmGKB" id="PA33756"/>
<dbReference type="VEuPathDB" id="HostDB:ENSG00000188191"/>
<dbReference type="eggNOG" id="KOG1113">
    <property type="taxonomic scope" value="Eukaryota"/>
</dbReference>
<dbReference type="GeneTree" id="ENSGT00940000157513"/>
<dbReference type="HOGENOM" id="CLU_018310_1_1_1"/>
<dbReference type="InParanoid" id="P31321"/>
<dbReference type="OMA" id="PHPTIHE"/>
<dbReference type="OrthoDB" id="417078at2759"/>
<dbReference type="PAN-GO" id="P31321">
    <property type="GO annotations" value="6 GO annotations based on evolutionary models"/>
</dbReference>
<dbReference type="PhylomeDB" id="P31321"/>
<dbReference type="TreeFam" id="TF314920"/>
<dbReference type="PathwayCommons" id="P31321"/>
<dbReference type="Reactome" id="R-HSA-163615">
    <property type="pathway name" value="PKA activation"/>
</dbReference>
<dbReference type="Reactome" id="R-HSA-164378">
    <property type="pathway name" value="PKA activation in glucagon signalling"/>
</dbReference>
<dbReference type="Reactome" id="R-HSA-180024">
    <property type="pathway name" value="DARPP-32 events"/>
</dbReference>
<dbReference type="Reactome" id="R-HSA-381676">
    <property type="pathway name" value="Glucagon-like Peptide-1 (GLP1) regulates insulin secretion"/>
</dbReference>
<dbReference type="Reactome" id="R-HSA-432040">
    <property type="pathway name" value="Vasopressin regulates renal water homeostasis via Aquaporins"/>
</dbReference>
<dbReference type="Reactome" id="R-HSA-442720">
    <property type="pathway name" value="CREB1 phosphorylation through the activation of Adenylate Cyclase"/>
</dbReference>
<dbReference type="Reactome" id="R-HSA-5610787">
    <property type="pathway name" value="Hedgehog 'off' state"/>
</dbReference>
<dbReference type="Reactome" id="R-HSA-9634597">
    <property type="pathway name" value="GPER1 signaling"/>
</dbReference>
<dbReference type="Reactome" id="R-HSA-9660821">
    <property type="pathway name" value="ADORA2B mediated anti-inflammatory cytokines production"/>
</dbReference>
<dbReference type="Reactome" id="R-HSA-9664323">
    <property type="pathway name" value="FCGR3A-mediated IL10 synthesis"/>
</dbReference>
<dbReference type="Reactome" id="R-HSA-983231">
    <property type="pathway name" value="Factors involved in megakaryocyte development and platelet production"/>
</dbReference>
<dbReference type="Reactome" id="R-HSA-9856530">
    <property type="pathway name" value="High laminar flow shear stress activates signaling by PIEZO1 and PECAM1:CDH5:KDR in endothelial cells"/>
</dbReference>
<dbReference type="SignaLink" id="P31321"/>
<dbReference type="SIGNOR" id="P31321"/>
<dbReference type="BioGRID-ORCS" id="5575">
    <property type="hits" value="21 hits in 1158 CRISPR screens"/>
</dbReference>
<dbReference type="ChiTaRS" id="PRKAR1B">
    <property type="organism name" value="human"/>
</dbReference>
<dbReference type="EvolutionaryTrace" id="P31321"/>
<dbReference type="GeneWiki" id="PRKAR1B"/>
<dbReference type="GenomeRNAi" id="5575"/>
<dbReference type="Pharos" id="P31321">
    <property type="development level" value="Tbio"/>
</dbReference>
<dbReference type="PRO" id="PR:P31321"/>
<dbReference type="Proteomes" id="UP000005640">
    <property type="component" value="Chromosome 7"/>
</dbReference>
<dbReference type="RNAct" id="P31321">
    <property type="molecule type" value="protein"/>
</dbReference>
<dbReference type="Bgee" id="ENSG00000188191">
    <property type="expression patterns" value="Expressed in Brodmann (1909) area 10 and 164 other cell types or tissues"/>
</dbReference>
<dbReference type="ExpressionAtlas" id="P31321">
    <property type="expression patterns" value="baseline and differential"/>
</dbReference>
<dbReference type="GO" id="GO:0005952">
    <property type="term" value="C:cAMP-dependent protein kinase complex"/>
    <property type="evidence" value="ECO:0000318"/>
    <property type="project" value="GO_Central"/>
</dbReference>
<dbReference type="GO" id="GO:0097546">
    <property type="term" value="C:ciliary base"/>
    <property type="evidence" value="ECO:0000304"/>
    <property type="project" value="Reactome"/>
</dbReference>
<dbReference type="GO" id="GO:0005829">
    <property type="term" value="C:cytosol"/>
    <property type="evidence" value="ECO:0000318"/>
    <property type="project" value="GO_Central"/>
</dbReference>
<dbReference type="GO" id="GO:0098978">
    <property type="term" value="C:glutamatergic synapse"/>
    <property type="evidence" value="ECO:0007669"/>
    <property type="project" value="Ensembl"/>
</dbReference>
<dbReference type="GO" id="GO:0098686">
    <property type="term" value="C:hippocampal mossy fiber to CA3 synapse"/>
    <property type="evidence" value="ECO:0007669"/>
    <property type="project" value="Ensembl"/>
</dbReference>
<dbReference type="GO" id="GO:0005771">
    <property type="term" value="C:multivesicular body"/>
    <property type="evidence" value="ECO:0007669"/>
    <property type="project" value="Ensembl"/>
</dbReference>
<dbReference type="GO" id="GO:0005886">
    <property type="term" value="C:plasma membrane"/>
    <property type="evidence" value="ECO:0007669"/>
    <property type="project" value="UniProtKB-SubCell"/>
</dbReference>
<dbReference type="GO" id="GO:0098794">
    <property type="term" value="C:postsynapse"/>
    <property type="evidence" value="ECO:0007669"/>
    <property type="project" value="Ensembl"/>
</dbReference>
<dbReference type="GO" id="GO:0098685">
    <property type="term" value="C:Schaffer collateral - CA1 synapse"/>
    <property type="evidence" value="ECO:0007669"/>
    <property type="project" value="Ensembl"/>
</dbReference>
<dbReference type="GO" id="GO:0030552">
    <property type="term" value="F:cAMP binding"/>
    <property type="evidence" value="ECO:0000318"/>
    <property type="project" value="GO_Central"/>
</dbReference>
<dbReference type="GO" id="GO:0004862">
    <property type="term" value="F:cAMP-dependent protein kinase inhibitor activity"/>
    <property type="evidence" value="ECO:0000314"/>
    <property type="project" value="BHF-UCL"/>
</dbReference>
<dbReference type="GO" id="GO:0008603">
    <property type="term" value="F:cAMP-dependent protein kinase regulator activity"/>
    <property type="evidence" value="ECO:0000314"/>
    <property type="project" value="BHF-UCL"/>
</dbReference>
<dbReference type="GO" id="GO:0034236">
    <property type="term" value="F:protein kinase A catalytic subunit binding"/>
    <property type="evidence" value="ECO:0000353"/>
    <property type="project" value="BHF-UCL"/>
</dbReference>
<dbReference type="GO" id="GO:0007189">
    <property type="term" value="P:adenylate cyclase-activating G protein-coupled receptor signaling pathway"/>
    <property type="evidence" value="ECO:0000318"/>
    <property type="project" value="GO_Central"/>
</dbReference>
<dbReference type="GO" id="GO:0007611">
    <property type="term" value="P:learning or memory"/>
    <property type="evidence" value="ECO:0007669"/>
    <property type="project" value="Ensembl"/>
</dbReference>
<dbReference type="GO" id="GO:0141162">
    <property type="term" value="P:negative regulation of cAMP/PKA signal transduction"/>
    <property type="evidence" value="ECO:0000314"/>
    <property type="project" value="BHF-UCL"/>
</dbReference>
<dbReference type="GO" id="GO:2000463">
    <property type="term" value="P:positive regulation of excitatory postsynaptic potential"/>
    <property type="evidence" value="ECO:0007669"/>
    <property type="project" value="Ensembl"/>
</dbReference>
<dbReference type="GO" id="GO:1903367">
    <property type="term" value="P:positive regulation of fear response"/>
    <property type="evidence" value="ECO:0007669"/>
    <property type="project" value="Ensembl"/>
</dbReference>
<dbReference type="GO" id="GO:1900273">
    <property type="term" value="P:positive regulation of long-term synaptic potentiation"/>
    <property type="evidence" value="ECO:0007669"/>
    <property type="project" value="Ensembl"/>
</dbReference>
<dbReference type="GO" id="GO:0098693">
    <property type="term" value="P:regulation of synaptic vesicle cycle"/>
    <property type="evidence" value="ECO:0007669"/>
    <property type="project" value="Ensembl"/>
</dbReference>
<dbReference type="CDD" id="cd00038">
    <property type="entry name" value="CAP_ED"/>
    <property type="match status" value="2"/>
</dbReference>
<dbReference type="CDD" id="cd12102">
    <property type="entry name" value="DD_RIbeta_PKA"/>
    <property type="match status" value="1"/>
</dbReference>
<dbReference type="DisProt" id="DP02632"/>
<dbReference type="FunFam" id="2.60.120.10:FF:000013">
    <property type="entry name" value="cAMP-dependent protein kinase type I regulatory subunit"/>
    <property type="match status" value="1"/>
</dbReference>
<dbReference type="FunFam" id="1.20.890.10:FF:000001">
    <property type="entry name" value="cAMP-dependent protein kinase type I-alpha regulatory subunit"/>
    <property type="match status" value="1"/>
</dbReference>
<dbReference type="FunFam" id="2.60.120.10:FF:000006">
    <property type="entry name" value="cAMP-dependent protein kinase type I-alpha regulatory subunit"/>
    <property type="match status" value="1"/>
</dbReference>
<dbReference type="Gene3D" id="1.20.890.10">
    <property type="entry name" value="cAMP-dependent protein kinase regulatory subunit, dimerization-anchoring domain"/>
    <property type="match status" value="1"/>
</dbReference>
<dbReference type="Gene3D" id="2.60.120.10">
    <property type="entry name" value="Jelly Rolls"/>
    <property type="match status" value="2"/>
</dbReference>
<dbReference type="InterPro" id="IPR050503">
    <property type="entry name" value="cAMP-dep_PK_reg_su-like"/>
</dbReference>
<dbReference type="InterPro" id="IPR012198">
    <property type="entry name" value="cAMP_dep_PK_reg_su"/>
</dbReference>
<dbReference type="InterPro" id="IPR003117">
    <property type="entry name" value="cAMP_dep_PK_reg_su_I/II_a/b"/>
</dbReference>
<dbReference type="InterPro" id="IPR018488">
    <property type="entry name" value="cNMP-bd_CS"/>
</dbReference>
<dbReference type="InterPro" id="IPR000595">
    <property type="entry name" value="cNMP-bd_dom"/>
</dbReference>
<dbReference type="InterPro" id="IPR018490">
    <property type="entry name" value="cNMP-bd_dom_sf"/>
</dbReference>
<dbReference type="InterPro" id="IPR042818">
    <property type="entry name" value="RIbeta_DD"/>
</dbReference>
<dbReference type="InterPro" id="IPR014710">
    <property type="entry name" value="RmlC-like_jellyroll"/>
</dbReference>
<dbReference type="PANTHER" id="PTHR11635">
    <property type="entry name" value="CAMP-DEPENDENT PROTEIN KINASE REGULATORY CHAIN"/>
    <property type="match status" value="1"/>
</dbReference>
<dbReference type="PANTHER" id="PTHR11635:SF126">
    <property type="entry name" value="CAMP-DEPENDENT PROTEIN KINASE TYPE I-BETA REGULATORY SUBUNIT"/>
    <property type="match status" value="1"/>
</dbReference>
<dbReference type="Pfam" id="PF00027">
    <property type="entry name" value="cNMP_binding"/>
    <property type="match status" value="2"/>
</dbReference>
<dbReference type="Pfam" id="PF02197">
    <property type="entry name" value="RIIa"/>
    <property type="match status" value="1"/>
</dbReference>
<dbReference type="PIRSF" id="PIRSF000548">
    <property type="entry name" value="PK_regulatory"/>
    <property type="match status" value="1"/>
</dbReference>
<dbReference type="PRINTS" id="PR00103">
    <property type="entry name" value="CAMPKINASE"/>
</dbReference>
<dbReference type="SMART" id="SM00100">
    <property type="entry name" value="cNMP"/>
    <property type="match status" value="2"/>
</dbReference>
<dbReference type="SMART" id="SM00394">
    <property type="entry name" value="RIIa"/>
    <property type="match status" value="1"/>
</dbReference>
<dbReference type="SUPFAM" id="SSF51206">
    <property type="entry name" value="cAMP-binding domain-like"/>
    <property type="match status" value="2"/>
</dbReference>
<dbReference type="SUPFAM" id="SSF47391">
    <property type="entry name" value="Dimerization-anchoring domain of cAMP-dependent PK regulatory subunit"/>
    <property type="match status" value="1"/>
</dbReference>
<dbReference type="PROSITE" id="PS00888">
    <property type="entry name" value="CNMP_BINDING_1"/>
    <property type="match status" value="2"/>
</dbReference>
<dbReference type="PROSITE" id="PS00889">
    <property type="entry name" value="CNMP_BINDING_2"/>
    <property type="match status" value="2"/>
</dbReference>
<dbReference type="PROSITE" id="PS50042">
    <property type="entry name" value="CNMP_BINDING_3"/>
    <property type="match status" value="2"/>
</dbReference>
<reference key="1">
    <citation type="journal article" date="1991" name="Biochem. Biophys. Res. Commun.">
        <title>Molecular cloning, cDNA structure and tissue-specific expression of the human regulatory subunit RI beta of cAMP-dependent protein kinases.</title>
        <authorList>
            <person name="Solberg R."/>
            <person name="Tasken K."/>
            <person name="Keiserud A."/>
            <person name="Jahnsen T."/>
        </authorList>
    </citation>
    <scope>NUCLEOTIDE SEQUENCE [MRNA]</scope>
    <scope>CLEAVAGE OF INITIATOR METHIONINE</scope>
</reference>
<reference key="2">
    <citation type="journal article" date="1994" name="Exp. Cell Res.">
        <title>Human regulatory subunit RI beta of cAMP-dependent protein kinases: expression, holoenzyme formation and microinjection into living cells.</title>
        <authorList>
            <person name="Solberg R."/>
            <person name="Tasken K."/>
            <person name="Wen W."/>
            <person name="Coghlan V.M."/>
            <person name="Meinkoth J.L."/>
            <person name="Scott J.D."/>
            <person name="Jahnsen T."/>
            <person name="Taylor S.S."/>
        </authorList>
    </citation>
    <scope>SEQUENCE REVISION TO 98-100</scope>
    <source>
        <tissue>Testis</tissue>
    </source>
</reference>
<reference key="3">
    <citation type="journal article" date="2004" name="Nat. Genet.">
        <title>Complete sequencing and characterization of 21,243 full-length human cDNAs.</title>
        <authorList>
            <person name="Ota T."/>
            <person name="Suzuki Y."/>
            <person name="Nishikawa T."/>
            <person name="Otsuki T."/>
            <person name="Sugiyama T."/>
            <person name="Irie R."/>
            <person name="Wakamatsu A."/>
            <person name="Hayashi K."/>
            <person name="Sato H."/>
            <person name="Nagai K."/>
            <person name="Kimura K."/>
            <person name="Makita H."/>
            <person name="Sekine M."/>
            <person name="Obayashi M."/>
            <person name="Nishi T."/>
            <person name="Shibahara T."/>
            <person name="Tanaka T."/>
            <person name="Ishii S."/>
            <person name="Yamamoto J."/>
            <person name="Saito K."/>
            <person name="Kawai Y."/>
            <person name="Isono Y."/>
            <person name="Nakamura Y."/>
            <person name="Nagahari K."/>
            <person name="Murakami K."/>
            <person name="Yasuda T."/>
            <person name="Iwayanagi T."/>
            <person name="Wagatsuma M."/>
            <person name="Shiratori A."/>
            <person name="Sudo H."/>
            <person name="Hosoiri T."/>
            <person name="Kaku Y."/>
            <person name="Kodaira H."/>
            <person name="Kondo H."/>
            <person name="Sugawara M."/>
            <person name="Takahashi M."/>
            <person name="Kanda K."/>
            <person name="Yokoi T."/>
            <person name="Furuya T."/>
            <person name="Kikkawa E."/>
            <person name="Omura Y."/>
            <person name="Abe K."/>
            <person name="Kamihara K."/>
            <person name="Katsuta N."/>
            <person name="Sato K."/>
            <person name="Tanikawa M."/>
            <person name="Yamazaki M."/>
            <person name="Ninomiya K."/>
            <person name="Ishibashi T."/>
            <person name="Yamashita H."/>
            <person name="Murakawa K."/>
            <person name="Fujimori K."/>
            <person name="Tanai H."/>
            <person name="Kimata M."/>
            <person name="Watanabe M."/>
            <person name="Hiraoka S."/>
            <person name="Chiba Y."/>
            <person name="Ishida S."/>
            <person name="Ono Y."/>
            <person name="Takiguchi S."/>
            <person name="Watanabe S."/>
            <person name="Yosida M."/>
            <person name="Hotuta T."/>
            <person name="Kusano J."/>
            <person name="Kanehori K."/>
            <person name="Takahashi-Fujii A."/>
            <person name="Hara H."/>
            <person name="Tanase T.-O."/>
            <person name="Nomura Y."/>
            <person name="Togiya S."/>
            <person name="Komai F."/>
            <person name="Hara R."/>
            <person name="Takeuchi K."/>
            <person name="Arita M."/>
            <person name="Imose N."/>
            <person name="Musashino K."/>
            <person name="Yuuki H."/>
            <person name="Oshima A."/>
            <person name="Sasaki N."/>
            <person name="Aotsuka S."/>
            <person name="Yoshikawa Y."/>
            <person name="Matsunawa H."/>
            <person name="Ichihara T."/>
            <person name="Shiohata N."/>
            <person name="Sano S."/>
            <person name="Moriya S."/>
            <person name="Momiyama H."/>
            <person name="Satoh N."/>
            <person name="Takami S."/>
            <person name="Terashima Y."/>
            <person name="Suzuki O."/>
            <person name="Nakagawa S."/>
            <person name="Senoh A."/>
            <person name="Mizoguchi H."/>
            <person name="Goto Y."/>
            <person name="Shimizu F."/>
            <person name="Wakebe H."/>
            <person name="Hishigaki H."/>
            <person name="Watanabe T."/>
            <person name="Sugiyama A."/>
            <person name="Takemoto M."/>
            <person name="Kawakami B."/>
            <person name="Yamazaki M."/>
            <person name="Watanabe K."/>
            <person name="Kumagai A."/>
            <person name="Itakura S."/>
            <person name="Fukuzumi Y."/>
            <person name="Fujimori Y."/>
            <person name="Komiyama M."/>
            <person name="Tashiro H."/>
            <person name="Tanigami A."/>
            <person name="Fujiwara T."/>
            <person name="Ono T."/>
            <person name="Yamada K."/>
            <person name="Fujii Y."/>
            <person name="Ozaki K."/>
            <person name="Hirao M."/>
            <person name="Ohmori Y."/>
            <person name="Kawabata A."/>
            <person name="Hikiji T."/>
            <person name="Kobatake N."/>
            <person name="Inagaki H."/>
            <person name="Ikema Y."/>
            <person name="Okamoto S."/>
            <person name="Okitani R."/>
            <person name="Kawakami T."/>
            <person name="Noguchi S."/>
            <person name="Itoh T."/>
            <person name="Shigeta K."/>
            <person name="Senba T."/>
            <person name="Matsumura K."/>
            <person name="Nakajima Y."/>
            <person name="Mizuno T."/>
            <person name="Morinaga M."/>
            <person name="Sasaki M."/>
            <person name="Togashi T."/>
            <person name="Oyama M."/>
            <person name="Hata H."/>
            <person name="Watanabe M."/>
            <person name="Komatsu T."/>
            <person name="Mizushima-Sugano J."/>
            <person name="Satoh T."/>
            <person name="Shirai Y."/>
            <person name="Takahashi Y."/>
            <person name="Nakagawa K."/>
            <person name="Okumura K."/>
            <person name="Nagase T."/>
            <person name="Nomura N."/>
            <person name="Kikuchi H."/>
            <person name="Masuho Y."/>
            <person name="Yamashita R."/>
            <person name="Nakai K."/>
            <person name="Yada T."/>
            <person name="Nakamura Y."/>
            <person name="Ohara O."/>
            <person name="Isogai T."/>
            <person name="Sugano S."/>
        </authorList>
    </citation>
    <scope>NUCLEOTIDE SEQUENCE [LARGE SCALE MRNA]</scope>
    <source>
        <tissue>Amygdala</tissue>
        <tissue>Brain</tissue>
    </source>
</reference>
<reference key="4">
    <citation type="journal article" date="2004" name="Genome Res.">
        <title>The status, quality, and expansion of the NIH full-length cDNA project: the Mammalian Gene Collection (MGC).</title>
        <authorList>
            <consortium name="The MGC Project Team"/>
        </authorList>
    </citation>
    <scope>NUCLEOTIDE SEQUENCE [LARGE SCALE MRNA]</scope>
    <source>
        <tissue>Brain</tissue>
        <tissue>Cervix</tissue>
    </source>
</reference>
<reference key="5">
    <citation type="journal article" date="2006" name="Anal. Biochem.">
        <title>Nitroproteins from a human pituitary adenoma tissue discovered with a nitrotyrosine affinity column and tandem mass spectrometry.</title>
        <authorList>
            <person name="Zhan X."/>
            <person name="Desiderio D.M."/>
        </authorList>
    </citation>
    <scope>NITRATION [LARGE SCALE ANALYSIS] AT TYR-21</scope>
    <scope>IDENTIFICATION BY MASS SPECTROMETRY [LARGE SCALE ANALYSIS]</scope>
    <source>
        <tissue>Pituitary adenoma</tissue>
    </source>
</reference>
<reference key="6">
    <citation type="journal article" date="2008" name="Mol. Cell">
        <title>Kinase-selective enrichment enables quantitative phosphoproteomics of the kinome across the cell cycle.</title>
        <authorList>
            <person name="Daub H."/>
            <person name="Olsen J.V."/>
            <person name="Bairlein M."/>
            <person name="Gnad F."/>
            <person name="Oppermann F.S."/>
            <person name="Korner R."/>
            <person name="Greff Z."/>
            <person name="Keri G."/>
            <person name="Stemmann O."/>
            <person name="Mann M."/>
        </authorList>
    </citation>
    <scope>IDENTIFICATION BY MASS SPECTROMETRY [LARGE SCALE ANALYSIS]</scope>
    <source>
        <tissue>Cervix carcinoma</tissue>
    </source>
</reference>
<reference key="7">
    <citation type="journal article" date="2008" name="Proc. Natl. Acad. Sci. U.S.A.">
        <title>A quantitative atlas of mitotic phosphorylation.</title>
        <authorList>
            <person name="Dephoure N."/>
            <person name="Zhou C."/>
            <person name="Villen J."/>
            <person name="Beausoleil S.A."/>
            <person name="Bakalarski C.E."/>
            <person name="Elledge S.J."/>
            <person name="Gygi S.P."/>
        </authorList>
    </citation>
    <scope>PHOSPHORYLATION [LARGE SCALE ANALYSIS] AT SER-77 AND SER-83</scope>
    <scope>IDENTIFICATION BY MASS SPECTROMETRY [LARGE SCALE ANALYSIS]</scope>
    <source>
        <tissue>Cervix carcinoma</tissue>
    </source>
</reference>
<reference key="8">
    <citation type="journal article" date="2009" name="Sci. Signal.">
        <title>Quantitative phosphoproteomic analysis of T cell receptor signaling reveals system-wide modulation of protein-protein interactions.</title>
        <authorList>
            <person name="Mayya V."/>
            <person name="Lundgren D.H."/>
            <person name="Hwang S.-I."/>
            <person name="Rezaul K."/>
            <person name="Wu L."/>
            <person name="Eng J.K."/>
            <person name="Rodionov V."/>
            <person name="Han D.K."/>
        </authorList>
    </citation>
    <scope>PHOSPHORYLATION [LARGE SCALE ANALYSIS] AT SER-83</scope>
    <scope>IDENTIFICATION BY MASS SPECTROMETRY [LARGE SCALE ANALYSIS]</scope>
    <source>
        <tissue>Leukemic T-cell</tissue>
    </source>
</reference>
<reference key="9">
    <citation type="journal article" date="2010" name="J. Biol. Chem.">
        <title>Regulation of cAMP-dependent protein kinases: the human protein kinase X (PrKX) reveals the role of the catalytic subunit alphaH-alphaI loop.</title>
        <authorList>
            <person name="Diskar M."/>
            <person name="Zenn H.M."/>
            <person name="Kaupisch A."/>
            <person name="Kaufholz M."/>
            <person name="Brockmeyer S."/>
            <person name="Sohmen D."/>
            <person name="Berrera M."/>
            <person name="Zaccolo M."/>
            <person name="Boshart M."/>
            <person name="Herberg F.W."/>
            <person name="Prinz A."/>
        </authorList>
    </citation>
    <scope>FUNCTION</scope>
    <scope>INTERACTION WITH PRKX</scope>
</reference>
<reference key="10">
    <citation type="journal article" date="2012" name="J. Biol. Chem.">
        <title>A small novel A-kinase anchoring protein (AKAP) that localizes specifically protein kinase A-regulatory subunit I (PKA-RI) to the plasma membrane.</title>
        <authorList>
            <person name="Burgers P.P."/>
            <person name="Ma Y."/>
            <person name="Margarucci L."/>
            <person name="Mackey M."/>
            <person name="van der Heyden M.A."/>
            <person name="Ellisman M."/>
            <person name="Scholten A."/>
            <person name="Taylor S.S."/>
            <person name="Heck A.J."/>
        </authorList>
    </citation>
    <scope>INTERACTION WITH C2ORF88/SMAKAP</scope>
    <scope>SUBCELLULAR LOCATION</scope>
</reference>
<reference key="11">
    <citation type="journal article" date="2013" name="J. Proteome Res.">
        <title>Toward a comprehensive characterization of a human cancer cell phosphoproteome.</title>
        <authorList>
            <person name="Zhou H."/>
            <person name="Di Palma S."/>
            <person name="Preisinger C."/>
            <person name="Peng M."/>
            <person name="Polat A.N."/>
            <person name="Heck A.J."/>
            <person name="Mohammed S."/>
        </authorList>
    </citation>
    <scope>PHOSPHORYLATION [LARGE SCALE ANALYSIS] AT SER-3 AND SER-83</scope>
    <scope>IDENTIFICATION BY MASS SPECTROMETRY [LARGE SCALE ANALYSIS]</scope>
    <source>
        <tissue>Cervix carcinoma</tissue>
        <tissue>Erythroleukemia</tissue>
    </source>
</reference>
<reference key="12">
    <citation type="journal article" date="2014" name="J. Proteomics">
        <title>An enzyme assisted RP-RPLC approach for in-depth analysis of human liver phosphoproteome.</title>
        <authorList>
            <person name="Bian Y."/>
            <person name="Song C."/>
            <person name="Cheng K."/>
            <person name="Dong M."/>
            <person name="Wang F."/>
            <person name="Huang J."/>
            <person name="Sun D."/>
            <person name="Wang L."/>
            <person name="Ye M."/>
            <person name="Zou H."/>
        </authorList>
    </citation>
    <scope>PHOSPHORYLATION [LARGE SCALE ANALYSIS] AT SER-83</scope>
    <scope>IDENTIFICATION BY MASS SPECTROMETRY [LARGE SCALE ANALYSIS]</scope>
    <source>
        <tissue>Liver</tissue>
    </source>
</reference>
<reference key="13">
    <citation type="journal article" date="2021" name="Genet. Med.">
        <title>Variants in PRKAR1B cause a neurodevelopmental disorder with autism spectrum disorder, apraxia, and insensitivity to pain.</title>
        <authorList>
            <person name="Marbach F."/>
            <person name="Stoyanov G."/>
            <person name="Erger F."/>
            <person name="Stratakis C.A."/>
            <person name="Settas N."/>
            <person name="London E."/>
            <person name="Rosenfeld J.A."/>
            <person name="Torti E."/>
            <person name="Haldeman-Englert C."/>
            <person name="Sklirou E."/>
            <person name="Kessler E."/>
            <person name="Ceulemans S."/>
            <person name="Nelson S.F."/>
            <person name="Martinez-Agosto J.A."/>
            <person name="Palmer C.G.S."/>
            <person name="Signer R.H."/>
            <person name="Andrews M.V."/>
            <person name="Grange D.K."/>
            <person name="Willaert R."/>
            <person name="Person R."/>
            <person name="Telegrafi A."/>
            <person name="Sievers A."/>
            <person name="Laugsch M."/>
            <person name="Theiss S."/>
            <person name="Cheng Y."/>
            <person name="Lichtarge O."/>
            <person name="Katsonis P."/>
            <person name="Stocco A."/>
            <person name="Schaaf C.P."/>
        </authorList>
    </citation>
    <scope>INVOLVEMENT IN MASNS</scope>
    <scope>DEVELOPMENTAL STAGE</scope>
    <scope>VARIANTS MASNS LEU-167; LYS-196 AND TRP-335</scope>
    <scope>CHARACTERIZATION OF VARIANTS MASNS LEU-167; LYS-196 AND TRP-335</scope>
</reference>
<proteinExistence type="evidence at protein level"/>
<evidence type="ECO:0000250" key="1"/>
<evidence type="ECO:0000250" key="2">
    <source>
        <dbReference type="UniProtKB" id="P12849"/>
    </source>
</evidence>
<evidence type="ECO:0000256" key="3">
    <source>
        <dbReference type="SAM" id="MobiDB-lite"/>
    </source>
</evidence>
<evidence type="ECO:0000269" key="4">
    <source>
    </source>
</evidence>
<evidence type="ECO:0000269" key="5">
    <source>
    </source>
</evidence>
<evidence type="ECO:0000269" key="6">
    <source>
    </source>
</evidence>
<evidence type="ECO:0000269" key="7">
    <source>
    </source>
</evidence>
<evidence type="ECO:0000305" key="8"/>
<evidence type="ECO:0007744" key="9">
    <source>
    </source>
</evidence>
<evidence type="ECO:0007744" key="10">
    <source>
    </source>
</evidence>
<evidence type="ECO:0007744" key="11">
    <source>
    </source>
</evidence>
<evidence type="ECO:0007744" key="12">
    <source>
    </source>
</evidence>
<evidence type="ECO:0007744" key="13">
    <source>
    </source>
</evidence>
<evidence type="ECO:0007829" key="14">
    <source>
        <dbReference type="PDB" id="4F9K"/>
    </source>
</evidence>
<keyword id="KW-0002">3D-structure</keyword>
<keyword id="KW-0114">cAMP</keyword>
<keyword id="KW-0116">cAMP-binding</keyword>
<keyword id="KW-1003">Cell membrane</keyword>
<keyword id="KW-0225">Disease variant</keyword>
<keyword id="KW-1015">Disulfide bond</keyword>
<keyword id="KW-0991">Intellectual disability</keyword>
<keyword id="KW-0472">Membrane</keyword>
<keyword id="KW-0488">Methylation</keyword>
<keyword id="KW-0944">Nitration</keyword>
<keyword id="KW-0547">Nucleotide-binding</keyword>
<keyword id="KW-0597">Phosphoprotein</keyword>
<keyword id="KW-1267">Proteomics identification</keyword>
<keyword id="KW-1185">Reference proteome</keyword>
<keyword id="KW-0677">Repeat</keyword>
<accession>P31321</accession>
<accession>Q8N422</accession>
<protein>
    <recommendedName>
        <fullName>cAMP-dependent protein kinase type I-beta regulatory subunit</fullName>
    </recommendedName>
</protein>
<name>KAP1_HUMAN</name>
<gene>
    <name type="primary">PRKAR1B</name>
</gene>
<feature type="initiator methionine" description="Removed" evidence="4">
    <location>
        <position position="1"/>
    </location>
</feature>
<feature type="chain" id="PRO_0000205381" description="cAMP-dependent protein kinase type I-beta regulatory subunit">
    <location>
        <begin position="2"/>
        <end position="381"/>
    </location>
</feature>
<feature type="region of interest" description="Dimerization and phosphorylation">
    <location>
        <begin position="2"/>
        <end position="136"/>
    </location>
</feature>
<feature type="region of interest" description="Disordered" evidence="3">
    <location>
        <begin position="67"/>
        <end position="98"/>
    </location>
</feature>
<feature type="short sequence motif" description="Pseudophosphorylation motif">
    <location>
        <begin position="96"/>
        <end position="100"/>
    </location>
</feature>
<feature type="binding site">
    <location>
        <begin position="137"/>
        <end position="254"/>
    </location>
    <ligand>
        <name>3',5'-cyclic AMP</name>
        <dbReference type="ChEBI" id="CHEBI:58165"/>
        <label>1</label>
    </ligand>
</feature>
<feature type="binding site">
    <location>
        <position position="202"/>
    </location>
    <ligand>
        <name>3',5'-cyclic AMP</name>
        <dbReference type="ChEBI" id="CHEBI:58165"/>
        <label>1</label>
    </ligand>
</feature>
<feature type="binding site">
    <location>
        <position position="211"/>
    </location>
    <ligand>
        <name>3',5'-cyclic AMP</name>
        <dbReference type="ChEBI" id="CHEBI:58165"/>
        <label>1</label>
    </ligand>
</feature>
<feature type="binding site">
    <location>
        <begin position="255"/>
        <end position="381"/>
    </location>
    <ligand>
        <name>3',5'-cyclic AMP</name>
        <dbReference type="ChEBI" id="CHEBI:58165"/>
        <label>2</label>
    </ligand>
</feature>
<feature type="binding site">
    <location>
        <position position="326"/>
    </location>
    <ligand>
        <name>3',5'-cyclic AMP</name>
        <dbReference type="ChEBI" id="CHEBI:58165"/>
        <label>2</label>
    </ligand>
</feature>
<feature type="binding site">
    <location>
        <position position="335"/>
    </location>
    <ligand>
        <name>3',5'-cyclic AMP</name>
        <dbReference type="ChEBI" id="CHEBI:58165"/>
        <label>2</label>
    </ligand>
</feature>
<feature type="modified residue" description="Phosphoserine" evidence="12">
    <location>
        <position position="3"/>
    </location>
</feature>
<feature type="modified residue" description="3'-nitrotyrosine" evidence="9">
    <location>
        <position position="21"/>
    </location>
</feature>
<feature type="modified residue" description="Phosphoserine" evidence="10">
    <location>
        <position position="77"/>
    </location>
</feature>
<feature type="modified residue" description="Phosphoserine" evidence="10 11 12 13">
    <location>
        <position position="83"/>
    </location>
</feature>
<feature type="modified residue" description="Phosphothreonine" evidence="2">
    <location>
        <position position="85"/>
    </location>
</feature>
<feature type="modified residue" description="Omega-N-methylarginine" evidence="2">
    <location>
        <position position="97"/>
    </location>
</feature>
<feature type="disulfide bond" description="Interchain (with C-39)" evidence="1">
    <location>
        <position position="18"/>
    </location>
</feature>
<feature type="disulfide bond" description="Interchain (with C-18)" evidence="1">
    <location>
        <position position="39"/>
    </location>
</feature>
<feature type="sequence variant" id="VAR_086687" description="In MASNS; uncertain significance; decreased basal PKA enzymatic activity in lysates from transfected cells; requires 2 nucleotide substitutions." evidence="7">
    <original>Q</original>
    <variation>L</variation>
    <location>
        <position position="167"/>
    </location>
</feature>
<feature type="sequence variant" id="VAR_086688" description="In MASNS; decreased basal PKA enzymatic activity in lysates from transfected cells." evidence="7">
    <original>E</original>
    <variation>K</variation>
    <location>
        <position position="196"/>
    </location>
</feature>
<feature type="sequence variant" id="VAR_086689" description="In MASNS; decreased basal PKA enzymatic activity in lysates from transfected cells." evidence="7">
    <original>R</original>
    <variation>W</variation>
    <location>
        <position position="335"/>
    </location>
</feature>
<feature type="sequence conflict" description="In Ref. 1; AAC37564." evidence="8" ref="1">
    <original>A</original>
    <variation>R</variation>
    <location>
        <position position="270"/>
    </location>
</feature>
<feature type="helix" evidence="14">
    <location>
        <begin position="19"/>
        <end position="24"/>
    </location>
</feature>
<feature type="turn" evidence="14">
    <location>
        <begin position="27"/>
        <end position="31"/>
    </location>
</feature>
<feature type="helix" evidence="14">
    <location>
        <begin position="32"/>
        <end position="41"/>
    </location>
</feature>
<feature type="helix" evidence="14">
    <location>
        <begin position="46"/>
        <end position="68"/>
    </location>
</feature>
<comment type="function">
    <text evidence="5">Regulatory subunit of the cAMP-dependent protein kinases involved in cAMP signaling in cells.</text>
</comment>
<comment type="subunit">
    <text evidence="5 6">The inactive holoenzyme is composed of two regulatory chains and two catalytic chains. Activation by cAMP releases the two active catalytic monomers and the regulatory dimer. Interacts with PRKX; regulates this cAMP-dependent protein kinase. Interacts with C2orf88/smAKAP; this interaction may target PRKAR1B to the plasma membrane.</text>
</comment>
<comment type="interaction">
    <interactant intactId="EBI-2805516">
        <id>P31321</id>
    </interactant>
    <interactant intactId="EBI-2119626">
        <id>Q86UN6</id>
        <label>AKAP14</label>
    </interactant>
    <organismsDiffer>false</organismsDiffer>
    <experiments>3</experiments>
</comment>
<comment type="interaction">
    <interactant intactId="EBI-2805516">
        <id>P31321</id>
    </interactant>
    <interactant intactId="EBI-10185182">
        <id>O43687-2</id>
        <label>AKAP7</label>
    </interactant>
    <organismsDiffer>false</organismsDiffer>
    <experiments>5</experiments>
</comment>
<comment type="interaction">
    <interactant intactId="EBI-2805516">
        <id>P31321</id>
    </interactant>
    <interactant intactId="EBI-11954519">
        <id>Q49AR9</id>
        <label>ANKS1A</label>
    </interactant>
    <organismsDiffer>false</organismsDiffer>
    <experiments>3</experiments>
</comment>
<comment type="interaction">
    <interactant intactId="EBI-2805516">
        <id>P31321</id>
    </interactant>
    <interactant intactId="EBI-747185">
        <id>O95817</id>
        <label>BAG3</label>
    </interactant>
    <organismsDiffer>false</organismsDiffer>
    <experiments>3</experiments>
</comment>
<comment type="interaction">
    <interactant intactId="EBI-2805516">
        <id>P31321</id>
    </interactant>
    <interactant intactId="EBI-10988864">
        <id>P46379-2</id>
        <label>BAG6</label>
    </interactant>
    <organismsDiffer>false</organismsDiffer>
    <experiments>3</experiments>
</comment>
<comment type="interaction">
    <interactant intactId="EBI-2805516">
        <id>P31321</id>
    </interactant>
    <interactant intactId="EBI-12118438">
        <id>Q8IYS8</id>
        <label>BOD1L2</label>
    </interactant>
    <organismsDiffer>false</organismsDiffer>
    <experiments>3</experiments>
</comment>
<comment type="interaction">
    <interactant intactId="EBI-2805516">
        <id>P31321</id>
    </interactant>
    <interactant intactId="EBI-12036363">
        <id>Q5T5Y3-3</id>
        <label>CAMSAP1</label>
    </interactant>
    <organismsDiffer>false</organismsDiffer>
    <experiments>6</experiments>
</comment>
<comment type="interaction">
    <interactant intactId="EBI-2805516">
        <id>P31321</id>
    </interactant>
    <interactant intactId="EBI-712912">
        <id>Q9HC52</id>
        <label>CBX8</label>
    </interactant>
    <organismsDiffer>false</organismsDiffer>
    <experiments>3</experiments>
</comment>
<comment type="interaction">
    <interactant intactId="EBI-2805516">
        <id>P31321</id>
    </interactant>
    <interactant intactId="EBI-10261970">
        <id>Q8IW40</id>
        <label>CCDC103</label>
    </interactant>
    <organismsDiffer>false</organismsDiffer>
    <experiments>5</experiments>
</comment>
<comment type="interaction">
    <interactant intactId="EBI-2805516">
        <id>P31321</id>
    </interactant>
    <interactant intactId="EBI-295634">
        <id>Q16543</id>
        <label>CDC37</label>
    </interactant>
    <organismsDiffer>false</organismsDiffer>
    <experiments>3</experiments>
</comment>
<comment type="interaction">
    <interactant intactId="EBI-2805516">
        <id>P31321</id>
    </interactant>
    <interactant intactId="EBI-375077">
        <id>P38936</id>
        <label>CDKN1A</label>
    </interactant>
    <organismsDiffer>false</organismsDiffer>
    <experiments>3</experiments>
</comment>
<comment type="interaction">
    <interactant intactId="EBI-2805516">
        <id>P31321</id>
    </interactant>
    <interactant intactId="EBI-741885">
        <id>Q96LK0</id>
        <label>CEP19</label>
    </interactant>
    <organismsDiffer>false</organismsDiffer>
    <experiments>5</experiments>
</comment>
<comment type="interaction">
    <interactant intactId="EBI-2805516">
        <id>P31321</id>
    </interactant>
    <interactant intactId="EBI-1053725">
        <id>P10606</id>
        <label>COX5B</label>
    </interactant>
    <organismsDiffer>false</organismsDiffer>
    <experiments>5</experiments>
</comment>
<comment type="interaction">
    <interactant intactId="EBI-2805516">
        <id>P31321</id>
    </interactant>
    <interactant intactId="EBI-10186082">
        <id>Q9UI36-2</id>
        <label>DACH1</label>
    </interactant>
    <organismsDiffer>false</organismsDiffer>
    <experiments>3</experiments>
</comment>
<comment type="interaction">
    <interactant intactId="EBI-2805516">
        <id>P31321</id>
    </interactant>
    <interactant intactId="EBI-11984733">
        <id>O60941-5</id>
        <label>DTNB</label>
    </interactant>
    <organismsDiffer>false</organismsDiffer>
    <experiments>3</experiments>
</comment>
<comment type="interaction">
    <interactant intactId="EBI-2805516">
        <id>P31321</id>
    </interactant>
    <interactant intactId="EBI-747840">
        <id>Q96G04</id>
        <label>EEF2KMT</label>
    </interactant>
    <organismsDiffer>false</organismsDiffer>
    <experiments>3</experiments>
</comment>
<comment type="interaction">
    <interactant intactId="EBI-2805516">
        <id>P31321</id>
    </interactant>
    <interactant intactId="EBI-719941">
        <id>Q3B820</id>
        <label>FAM161A</label>
    </interactant>
    <organismsDiffer>false</organismsDiffer>
    <experiments>3</experiments>
</comment>
<comment type="interaction">
    <interactant intactId="EBI-2805516">
        <id>P31321</id>
    </interactant>
    <interactant intactId="EBI-6658203">
        <id>Q86YD7</id>
        <label>FAM90A1</label>
    </interactant>
    <organismsDiffer>false</organismsDiffer>
    <experiments>3</experiments>
</comment>
<comment type="interaction">
    <interactant intactId="EBI-2805516">
        <id>P31321</id>
    </interactant>
    <interactant intactId="EBI-11958845">
        <id>O94868-3</id>
        <label>FCHSD2</label>
    </interactant>
    <organismsDiffer>false</organismsDiffer>
    <experiments>3</experiments>
</comment>
<comment type="interaction">
    <interactant intactId="EBI-2805516">
        <id>P31321</id>
    </interactant>
    <interactant intactId="EBI-7960826">
        <id>Q8NHY3</id>
        <label>GAS2L2</label>
    </interactant>
    <organismsDiffer>false</organismsDiffer>
    <experiments>3</experiments>
</comment>
<comment type="interaction">
    <interactant intactId="EBI-2805516">
        <id>P31321</id>
    </interactant>
    <interactant intactId="EBI-7251368">
        <id>Q9BZE0</id>
        <label>GLIS2</label>
    </interactant>
    <organismsDiffer>false</organismsDiffer>
    <experiments>3</experiments>
</comment>
<comment type="interaction">
    <interactant intactId="EBI-2805516">
        <id>P31321</id>
    </interactant>
    <interactant intactId="EBI-746682">
        <id>Q9NVN8</id>
        <label>GNL3L</label>
    </interactant>
    <organismsDiffer>false</organismsDiffer>
    <experiments>3</experiments>
</comment>
<comment type="interaction">
    <interactant intactId="EBI-2805516">
        <id>P31321</id>
    </interactant>
    <interactant intactId="EBI-6164177">
        <id>Q92805</id>
        <label>GOLGA1</label>
    </interactant>
    <organismsDiffer>false</organismsDiffer>
    <experiments>3</experiments>
</comment>
<comment type="interaction">
    <interactant intactId="EBI-2805516">
        <id>P31321</id>
    </interactant>
    <interactant intactId="EBI-746309">
        <id>Q92917</id>
        <label>GPKOW</label>
    </interactant>
    <organismsDiffer>false</organismsDiffer>
    <experiments>3</experiments>
</comment>
<comment type="interaction">
    <interactant intactId="EBI-2805516">
        <id>P31321</id>
    </interactant>
    <interactant intactId="EBI-6873005">
        <id>P43080</id>
        <label>GUCA1A</label>
    </interactant>
    <organismsDiffer>false</organismsDiffer>
    <experiments>3</experiments>
</comment>
<comment type="interaction">
    <interactant intactId="EBI-2805516">
        <id>P31321</id>
    </interactant>
    <interactant intactId="EBI-11955401">
        <id>Q86VF2-5</id>
        <label>IGFN1</label>
    </interactant>
    <organismsDiffer>false</organismsDiffer>
    <experiments>3</experiments>
</comment>
<comment type="interaction">
    <interactant intactId="EBI-2805516">
        <id>P31321</id>
    </interactant>
    <interactant intactId="EBI-10236940">
        <id>Q15735</id>
        <label>INPP5J</label>
    </interactant>
    <organismsDiffer>false</organismsDiffer>
    <experiments>3</experiments>
</comment>
<comment type="interaction">
    <interactant intactId="EBI-2805516">
        <id>P31321</id>
    </interactant>
    <interactant intactId="EBI-2556193">
        <id>Q63ZY3</id>
        <label>KANK2</label>
    </interactant>
    <organismsDiffer>false</organismsDiffer>
    <experiments>3</experiments>
</comment>
<comment type="interaction">
    <interactant intactId="EBI-2805516">
        <id>P31321</id>
    </interactant>
    <interactant intactId="EBI-355878">
        <id>P33176</id>
        <label>KIF5B</label>
    </interactant>
    <organismsDiffer>false</organismsDiffer>
    <experiments>3</experiments>
</comment>
<comment type="interaction">
    <interactant intactId="EBI-2805516">
        <id>P31321</id>
    </interactant>
    <interactant intactId="EBI-739909">
        <id>Q969R5</id>
        <label>L3MBTL2</label>
    </interactant>
    <organismsDiffer>false</organismsDiffer>
    <experiments>3</experiments>
</comment>
<comment type="interaction">
    <interactant intactId="EBI-2805516">
        <id>P31321</id>
    </interactant>
    <interactant intactId="EBI-726510">
        <id>Q96BZ8</id>
        <label>LENG1</label>
    </interactant>
    <organismsDiffer>false</organismsDiffer>
    <experiments>3</experiments>
</comment>
<comment type="interaction">
    <interactant intactId="EBI-2805516">
        <id>P31321</id>
    </interactant>
    <interactant intactId="EBI-739832">
        <id>Q8TBB1</id>
        <label>LNX1</label>
    </interactant>
    <organismsDiffer>false</organismsDiffer>
    <experiments>3</experiments>
</comment>
<comment type="interaction">
    <interactant intactId="EBI-2805516">
        <id>P31321</id>
    </interactant>
    <interactant intactId="EBI-11978579">
        <id>O95983-2</id>
        <label>MBD3</label>
    </interactant>
    <organismsDiffer>false</organismsDiffer>
    <experiments>3</experiments>
</comment>
<comment type="interaction">
    <interactant intactId="EBI-2805516">
        <id>P31321</id>
    </interactant>
    <interactant intactId="EBI-10286267">
        <id>Q96G25-2</id>
        <label>MED8</label>
    </interactant>
    <organismsDiffer>false</organismsDiffer>
    <experiments>3</experiments>
</comment>
<comment type="interaction">
    <interactant intactId="EBI-2805516">
        <id>P31321</id>
    </interactant>
    <interactant intactId="EBI-14086479">
        <id>Q8IVT4</id>
        <label>MGC50722</label>
    </interactant>
    <organismsDiffer>false</organismsDiffer>
    <experiments>3</experiments>
</comment>
<comment type="interaction">
    <interactant intactId="EBI-2805516">
        <id>P31321</id>
    </interactant>
    <interactant intactId="EBI-7950783">
        <id>Q96JP2</id>
        <label>MYO15B</label>
    </interactant>
    <organismsDiffer>false</organismsDiffer>
    <experiments>3</experiments>
</comment>
<comment type="interaction">
    <interactant intactId="EBI-2805516">
        <id>P31321</id>
    </interactant>
    <interactant intactId="EBI-741158">
        <id>Q96HA8</id>
        <label>NTAQ1</label>
    </interactant>
    <organismsDiffer>false</organismsDiffer>
    <experiments>3</experiments>
</comment>
<comment type="interaction">
    <interactant intactId="EBI-2805516">
        <id>P31321</id>
    </interactant>
    <interactant intactId="EBI-398874">
        <id>Q9UBU9</id>
        <label>NXF1</label>
    </interactant>
    <organismsDiffer>false</organismsDiffer>
    <experiments>3</experiments>
</comment>
<comment type="interaction">
    <interactant intactId="EBI-2805516">
        <id>P31321</id>
    </interactant>
    <interactant intactId="EBI-79893">
        <id>Q92569</id>
        <label>PIK3R3</label>
    </interactant>
    <organismsDiffer>false</organismsDiffer>
    <experiments>3</experiments>
</comment>
<comment type="interaction">
    <interactant intactId="EBI-2805516">
        <id>P31321</id>
    </interactant>
    <interactant intactId="EBI-867034">
        <id>Q9NR33</id>
        <label>POLE4</label>
    </interactant>
    <organismsDiffer>false</organismsDiffer>
    <experiments>3</experiments>
</comment>
<comment type="interaction">
    <interactant intactId="EBI-2805516">
        <id>P31321</id>
    </interactant>
    <interactant intactId="EBI-1383852">
        <id>P54646</id>
        <label>PRKAA2</label>
    </interactant>
    <organismsDiffer>false</organismsDiffer>
    <experiments>3</experiments>
</comment>
<comment type="interaction">
    <interactant intactId="EBI-2805516">
        <id>P31321</id>
    </interactant>
    <interactant intactId="EBI-476586">
        <id>P17612</id>
        <label>PRKACA</label>
    </interactant>
    <organismsDiffer>false</organismsDiffer>
    <experiments>12</experiments>
</comment>
<comment type="interaction">
    <interactant intactId="EBI-2805516">
        <id>P31321</id>
    </interactant>
    <interactant intactId="EBI-476431">
        <id>P10644</id>
        <label>PRKAR1A</label>
    </interactant>
    <organismsDiffer>false</organismsDiffer>
    <experiments>9</experiments>
</comment>
<comment type="interaction">
    <interactant intactId="EBI-2805516">
        <id>P31321</id>
    </interactant>
    <interactant intactId="EBI-2798416">
        <id>Q99633</id>
        <label>PRPF18</label>
    </interactant>
    <organismsDiffer>false</organismsDiffer>
    <experiments>3</experiments>
</comment>
<comment type="interaction">
    <interactant intactId="EBI-2805516">
        <id>P31321</id>
    </interactant>
    <interactant intactId="EBI-6286129">
        <id>O95456</id>
        <label>PSMG1</label>
    </interactant>
    <organismsDiffer>false</organismsDiffer>
    <experiments>3</experiments>
</comment>
<comment type="interaction">
    <interactant intactId="EBI-2805516">
        <id>P31321</id>
    </interactant>
    <interactant intactId="EBI-2798044">
        <id>Q2TAL8</id>
        <label>QRICH1</label>
    </interactant>
    <organismsDiffer>false</organismsDiffer>
    <experiments>3</experiments>
</comment>
<comment type="interaction">
    <interactant intactId="EBI-2805516">
        <id>P31321</id>
    </interactant>
    <interactant intactId="EBI-2568901">
        <id>P13631</id>
        <label>RARG</label>
    </interactant>
    <organismsDiffer>false</organismsDiffer>
    <experiments>5</experiments>
</comment>
<comment type="interaction">
    <interactant intactId="EBI-2805516">
        <id>P31321</id>
    </interactant>
    <interactant intactId="EBI-11984663">
        <id>Q06455-2</id>
        <label>RUNX1T1</label>
    </interactant>
    <organismsDiffer>false</organismsDiffer>
    <experiments>3</experiments>
</comment>
<comment type="interaction">
    <interactant intactId="EBI-2805516">
        <id>P31321</id>
    </interactant>
    <interactant intactId="EBI-751683">
        <id>Q9UHR5</id>
        <label>SAP30BP</label>
    </interactant>
    <organismsDiffer>false</organismsDiffer>
    <experiments>3</experiments>
</comment>
<comment type="interaction">
    <interactant intactId="EBI-2805516">
        <id>P31321</id>
    </interactant>
    <interactant intactId="EBI-747035">
        <id>Q9H788</id>
        <label>SH2D4A</label>
    </interactant>
    <organismsDiffer>false</organismsDiffer>
    <experiments>3</experiments>
</comment>
<comment type="interaction">
    <interactant intactId="EBI-2805516">
        <id>P31321</id>
    </interactant>
    <interactant intactId="EBI-79084">
        <id>Q92529</id>
        <label>SHC3</label>
    </interactant>
    <organismsDiffer>false</organismsDiffer>
    <experiments>3</experiments>
</comment>
<comment type="interaction">
    <interactant intactId="EBI-2805516">
        <id>P31321</id>
    </interactant>
    <interactant intactId="EBI-2872322">
        <id>Q9H0W8</id>
        <label>SMG9</label>
    </interactant>
    <organismsDiffer>false</organismsDiffer>
    <experiments>3</experiments>
</comment>
<comment type="interaction">
    <interactant intactId="EBI-2805516">
        <id>P31321</id>
    </interactant>
    <interactant intactId="EBI-632715">
        <id>Q13573</id>
        <label>SNW1</label>
    </interactant>
    <organismsDiffer>false</organismsDiffer>
    <experiments>3</experiments>
</comment>
<comment type="interaction">
    <interactant intactId="EBI-2805516">
        <id>P31321</id>
    </interactant>
    <interactant intactId="EBI-749295">
        <id>O75716</id>
        <label>STK16</label>
    </interactant>
    <organismsDiffer>false</organismsDiffer>
    <experiments>3</experiments>
</comment>
<comment type="interaction">
    <interactant intactId="EBI-2805516">
        <id>P31321</id>
    </interactant>
    <interactant intactId="EBI-747142">
        <id>Q96C24</id>
        <label>SYTL4</label>
    </interactant>
    <organismsDiffer>false</organismsDiffer>
    <experiments>3</experiments>
</comment>
<comment type="interaction">
    <interactant intactId="EBI-2805516">
        <id>P31321</id>
    </interactant>
    <interactant intactId="EBI-745958">
        <id>Q5VWN6</id>
        <label>TASOR2</label>
    </interactant>
    <organismsDiffer>false</organismsDiffer>
    <experiments>3</experiments>
</comment>
<comment type="interaction">
    <interactant intactId="EBI-2805516">
        <id>P31321</id>
    </interactant>
    <interactant intactId="EBI-747736">
        <id>Q15561</id>
        <label>TEAD4</label>
    </interactant>
    <organismsDiffer>false</organismsDiffer>
    <experiments>3</experiments>
</comment>
<comment type="interaction">
    <interactant intactId="EBI-2805516">
        <id>P31321</id>
    </interactant>
    <interactant intactId="EBI-286285">
        <id>P10827</id>
        <label>THRA</label>
    </interactant>
    <organismsDiffer>false</organismsDiffer>
    <experiments>5</experiments>
</comment>
<comment type="interaction">
    <interactant intactId="EBI-2805516">
        <id>P31321</id>
    </interactant>
    <interactant intactId="EBI-10241197">
        <id>Q3SY00</id>
        <label>TSGA10IP</label>
    </interactant>
    <organismsDiffer>false</organismsDiffer>
    <experiments>3</experiments>
</comment>
<comment type="interaction">
    <interactant intactId="EBI-2805516">
        <id>P31321</id>
    </interactant>
    <interactant intactId="EBI-350510">
        <id>Q9BZF9</id>
        <label>UACA</label>
    </interactant>
    <organismsDiffer>false</organismsDiffer>
    <experiments>3</experiments>
</comment>
<comment type="interaction">
    <interactant intactId="EBI-2805516">
        <id>P31321</id>
    </interactant>
    <interactant intactId="EBI-11980193">
        <id>Q14119</id>
        <label>VEZF1</label>
    </interactant>
    <organismsDiffer>false</organismsDiffer>
    <experiments>3</experiments>
</comment>
<comment type="interaction">
    <interactant intactId="EBI-2805516">
        <id>P31321</id>
    </interactant>
    <interactant intactId="EBI-711925">
        <id>Q05516</id>
        <label>ZBTB16</label>
    </interactant>
    <organismsDiffer>false</organismsDiffer>
    <experiments>3</experiments>
</comment>
<comment type="interaction">
    <interactant intactId="EBI-2805516">
        <id>P31321</id>
    </interactant>
    <interactant intactId="EBI-746595">
        <id>Q96E35</id>
        <label>ZMYND19</label>
    </interactant>
    <organismsDiffer>false</organismsDiffer>
    <experiments>3</experiments>
</comment>
<comment type="interaction">
    <interactant intactId="EBI-2805516">
        <id>P31321</id>
    </interactant>
    <interactant intactId="EBI-12272076">
        <id>Q13360-2</id>
        <label>ZNF177</label>
    </interactant>
    <organismsDiffer>false</organismsDiffer>
    <experiments>3</experiments>
</comment>
<comment type="interaction">
    <interactant intactId="EBI-2805516">
        <id>P31321</id>
    </interactant>
    <interactant intactId="EBI-7233259">
        <id>Q86UD4</id>
        <label>ZNF329</label>
    </interactant>
    <organismsDiffer>false</organismsDiffer>
    <experiments>3</experiments>
</comment>
<comment type="interaction">
    <interactant intactId="EBI-2805516">
        <id>P31321</id>
    </interactant>
    <interactant intactId="EBI-11041653">
        <id>P13682</id>
        <label>ZNF35</label>
    </interactant>
    <organismsDiffer>false</organismsDiffer>
    <experiments>3</experiments>
</comment>
<comment type="interaction">
    <interactant intactId="EBI-2805516">
        <id>P31321</id>
    </interactant>
    <interactant intactId="EBI-11741890">
        <id>Q86VK4-3</id>
        <label>ZNF410</label>
    </interactant>
    <organismsDiffer>false</organismsDiffer>
    <experiments>3</experiments>
</comment>
<comment type="interaction">
    <interactant intactId="EBI-2805516">
        <id>P31321</id>
    </interactant>
    <interactant intactId="EBI-7254550">
        <id>P36508</id>
        <label>ZNF76</label>
    </interactant>
    <organismsDiffer>false</organismsDiffer>
    <experiments>3</experiments>
</comment>
<comment type="subcellular location">
    <subcellularLocation>
        <location evidence="6">Cell membrane</location>
    </subcellularLocation>
</comment>
<comment type="tissue specificity">
    <text>Four types of regulatory chains are found: I-alpha, I-beta, II-alpha, and II-beta. Their expression varies among tissues and is in some cases constitutive and in others inducible.</text>
</comment>
<comment type="developmental stage">
    <text evidence="7">Expressed at high levels in the pituitary, diencephalon, mesencephalon, and hypothalamus in embryos at Carnegie stage 22.</text>
</comment>
<comment type="PTM">
    <text>The pseudophosphorylation site binds to the substrate-binding region of the catalytic chain, resulting in the inhibition of its activity.</text>
</comment>
<comment type="disease" evidence="7">
    <disease id="DI-06296">
        <name>Marbach-Schaaf neurodevelopmental syndrome</name>
        <acronym>MASNS</acronym>
        <description>An autosomal dominant neurodevelopmental disorder characterized by global developmental delay, speech delay, behavioral abnormalities, hypotonia, and movement disorders including dyspraxia, apraxia, and clumsiness. More variable features include high pain tolerance, sleep disturbances, and variable non-specific dysmorphic features.</description>
        <dbReference type="MIM" id="619680"/>
    </disease>
    <text>The disease is caused by variants affecting the gene represented in this entry.</text>
</comment>
<comment type="similarity">
    <text evidence="8">Belongs to the cAMP-dependent kinase regulatory chain family.</text>
</comment>
<organism>
    <name type="scientific">Homo sapiens</name>
    <name type="common">Human</name>
    <dbReference type="NCBI Taxonomy" id="9606"/>
    <lineage>
        <taxon>Eukaryota</taxon>
        <taxon>Metazoa</taxon>
        <taxon>Chordata</taxon>
        <taxon>Craniata</taxon>
        <taxon>Vertebrata</taxon>
        <taxon>Euteleostomi</taxon>
        <taxon>Mammalia</taxon>
        <taxon>Eutheria</taxon>
        <taxon>Euarchontoglires</taxon>
        <taxon>Primates</taxon>
        <taxon>Haplorrhini</taxon>
        <taxon>Catarrhini</taxon>
        <taxon>Hominidae</taxon>
        <taxon>Homo</taxon>
    </lineage>
</organism>
<sequence length="381" mass="43073">MASPPACPSEEDESLKGCELYVQLHGIQQVLKDCIVHLCISKPERPMKFLREHFEKLEKEENRQILARQKSNSQSDSHDEEVSPTPPNPVVKARRRRGGVSAEVYTEEDAVSYVRKVIPKDYKTMTALAKAISKNVLFAHLDDNERSDIFDAMFPVTHIAGETVIQQGNEGDNFYVVDQGEVDVYVNGEWVTNISEGGSFGELALIYGTPRAATVKAKTDLKLWGIDRDSYRRILMGSTLRKRKMYEEFLSKVSILESLEKWERLTVADALEPVQFEDGEKIVVQGEPGDDFYIITEGTASVLQRRSPNEEYVEVGRLGPSDYFGEIALLLNRPRAATVVARGPLKCVKLDRPRFERVLGPCSEILKRNIQRYNSFISLTV</sequence>